<proteinExistence type="predicted"/>
<organism>
    <name type="scientific">Caenorhabditis elegans</name>
    <dbReference type="NCBI Taxonomy" id="6239"/>
    <lineage>
        <taxon>Eukaryota</taxon>
        <taxon>Metazoa</taxon>
        <taxon>Ecdysozoa</taxon>
        <taxon>Nematoda</taxon>
        <taxon>Chromadorea</taxon>
        <taxon>Rhabditida</taxon>
        <taxon>Rhabditina</taxon>
        <taxon>Rhabditomorpha</taxon>
        <taxon>Rhabditoidea</taxon>
        <taxon>Rhabditidae</taxon>
        <taxon>Peloderinae</taxon>
        <taxon>Caenorhabditis</taxon>
    </lineage>
</organism>
<keyword id="KW-1185">Reference proteome</keyword>
<sequence length="453" mass="51968">MFASSPDHFRPHDSLNLPTYIHISLMESEEQCDSINFPFSLRLDNPTLERIAVKKLKCIERGYAYPHIDIVFARGETSLLTNGLITSEKDQKTCGFYKSVQTISRNSTELQLLPDFETKTNLNGYVIFAYNTMEHMHTPKFTTSWKTWSGARMLSTRMPLPHIVTKMSFFKKVSGHLTFEYILIAKVKNMMVNAAPALNVLHYMKPKLCAYVGAYRKISFEVNRNLCRSLGLAEANYADALTNRFRVSYSNNTGYVEMSKFIEYRCKEEEEEARAAKEKLVKKSTHVQTEPTDTLRNIRKKLPRTLPSTPNTIRSPSTPPIFYPTYPSPNSIIGTIIEHKSEIVTVGNNYLLVLDNRNQAANVLSYTPRSEALQKAEKIFNDQMPSLPVEHKDIPQVFSRSPSNLYNSNNETPLLQNFQKLPEDDGSLLRHLKTKYFNSEEYTSAEFCKHMPK</sequence>
<accession>Q11089</accession>
<evidence type="ECO:0000312" key="1">
    <source>
        <dbReference type="WormBase" id="C01C4.2"/>
    </source>
</evidence>
<protein>
    <recommendedName>
        <fullName>Uncharacterized protein C01C4.2</fullName>
    </recommendedName>
</protein>
<name>YWY2_CAEEL</name>
<reference key="1">
    <citation type="journal article" date="1998" name="Science">
        <title>Genome sequence of the nematode C. elegans: a platform for investigating biology.</title>
        <authorList>
            <consortium name="The C. elegans sequencing consortium"/>
        </authorList>
    </citation>
    <scope>NUCLEOTIDE SEQUENCE [LARGE SCALE GENOMIC DNA]</scope>
    <source>
        <strain>Bristol N2</strain>
    </source>
</reference>
<dbReference type="EMBL" id="BX284606">
    <property type="protein sequence ID" value="CCD62366.2"/>
    <property type="molecule type" value="Genomic_DNA"/>
</dbReference>
<dbReference type="PIR" id="T34075">
    <property type="entry name" value="T34075"/>
</dbReference>
<dbReference type="RefSeq" id="NP_001359815.1">
    <property type="nucleotide sequence ID" value="NM_001373264.1"/>
</dbReference>
<dbReference type="RefSeq" id="NP_508639.2">
    <property type="nucleotide sequence ID" value="NM_076238.3"/>
</dbReference>
<dbReference type="FunCoup" id="Q11089">
    <property type="interactions" value="1522"/>
</dbReference>
<dbReference type="PaxDb" id="6239-C01C4.2"/>
<dbReference type="EnsemblMetazoa" id="C01C4.2.1">
    <property type="protein sequence ID" value="C01C4.2.1"/>
    <property type="gene ID" value="WBGene00015292"/>
</dbReference>
<dbReference type="GeneID" id="182065"/>
<dbReference type="UCSC" id="C01C4.2">
    <property type="organism name" value="c. elegans"/>
</dbReference>
<dbReference type="AGR" id="WB:WBGene00015292"/>
<dbReference type="WormBase" id="C01C4.2">
    <property type="protein sequence ID" value="CE53364"/>
    <property type="gene ID" value="WBGene00015292"/>
</dbReference>
<dbReference type="eggNOG" id="ENOG502RIXY">
    <property type="taxonomic scope" value="Eukaryota"/>
</dbReference>
<dbReference type="GeneTree" id="ENSGT00390000005099"/>
<dbReference type="HOGENOM" id="CLU_1095132_0_0_1"/>
<dbReference type="InParanoid" id="Q11089"/>
<dbReference type="OrthoDB" id="6060890at2759"/>
<dbReference type="PRO" id="PR:Q11089"/>
<dbReference type="Proteomes" id="UP000001940">
    <property type="component" value="Chromosome X"/>
</dbReference>
<dbReference type="InterPro" id="IPR055577">
    <property type="entry name" value="DUF7153"/>
</dbReference>
<dbReference type="PANTHER" id="PTHR22198">
    <property type="entry name" value="FERM DOMAIN-CONTAINING PROTEIN"/>
    <property type="match status" value="1"/>
</dbReference>
<dbReference type="PANTHER" id="PTHR22198:SF2">
    <property type="entry name" value="PROTEIN CBG14274"/>
    <property type="match status" value="1"/>
</dbReference>
<dbReference type="Pfam" id="PF23672">
    <property type="entry name" value="DUF7153"/>
    <property type="match status" value="1"/>
</dbReference>
<feature type="chain" id="PRO_0000065095" description="Uncharacterized protein C01C4.2">
    <location>
        <begin position="1"/>
        <end position="453"/>
    </location>
</feature>
<gene>
    <name evidence="1" type="ORF">C01C4.2</name>
</gene>